<name>ALLC_ACIBS</name>
<keyword id="KW-0378">Hydrolase</keyword>
<keyword id="KW-0659">Purine metabolism</keyword>
<protein>
    <recommendedName>
        <fullName evidence="1">Probable allantoicase</fullName>
        <ecNumber evidence="1">3.5.3.4</ecNumber>
    </recommendedName>
    <alternativeName>
        <fullName evidence="1">Allantoate amidinohydrolase</fullName>
    </alternativeName>
</protein>
<dbReference type="EC" id="3.5.3.4" evidence="1"/>
<dbReference type="EMBL" id="CU468230">
    <property type="protein sequence ID" value="CAP02762.1"/>
    <property type="molecule type" value="Genomic_DNA"/>
</dbReference>
<dbReference type="SMR" id="B0VP26"/>
<dbReference type="KEGG" id="abm:ABSDF3499"/>
<dbReference type="HOGENOM" id="CLU_038797_1_2_6"/>
<dbReference type="UniPathway" id="UPA00395">
    <property type="reaction ID" value="UER00654"/>
</dbReference>
<dbReference type="Proteomes" id="UP000001741">
    <property type="component" value="Chromosome"/>
</dbReference>
<dbReference type="GO" id="GO:0004037">
    <property type="term" value="F:allantoicase activity"/>
    <property type="evidence" value="ECO:0007669"/>
    <property type="project" value="UniProtKB-UniRule"/>
</dbReference>
<dbReference type="GO" id="GO:0000256">
    <property type="term" value="P:allantoin catabolic process"/>
    <property type="evidence" value="ECO:0007669"/>
    <property type="project" value="UniProtKB-UniRule"/>
</dbReference>
<dbReference type="GO" id="GO:0006144">
    <property type="term" value="P:purine nucleobase metabolic process"/>
    <property type="evidence" value="ECO:0007669"/>
    <property type="project" value="UniProtKB-KW"/>
</dbReference>
<dbReference type="Gene3D" id="2.60.120.260">
    <property type="entry name" value="Galactose-binding domain-like"/>
    <property type="match status" value="2"/>
</dbReference>
<dbReference type="HAMAP" id="MF_00813">
    <property type="entry name" value="Allantoicase"/>
    <property type="match status" value="1"/>
</dbReference>
<dbReference type="InterPro" id="IPR005164">
    <property type="entry name" value="Allantoicase"/>
</dbReference>
<dbReference type="InterPro" id="IPR015908">
    <property type="entry name" value="Allantoicase_dom"/>
</dbReference>
<dbReference type="InterPro" id="IPR008979">
    <property type="entry name" value="Galactose-bd-like_sf"/>
</dbReference>
<dbReference type="NCBIfam" id="TIGR02961">
    <property type="entry name" value="allantoicase"/>
    <property type="match status" value="1"/>
</dbReference>
<dbReference type="PANTHER" id="PTHR12045">
    <property type="entry name" value="ALLANTOICASE"/>
    <property type="match status" value="1"/>
</dbReference>
<dbReference type="PANTHER" id="PTHR12045:SF3">
    <property type="entry name" value="INACTIVE ALLANTOICASE-RELATED"/>
    <property type="match status" value="1"/>
</dbReference>
<dbReference type="Pfam" id="PF03561">
    <property type="entry name" value="Allantoicase"/>
    <property type="match status" value="2"/>
</dbReference>
<dbReference type="PIRSF" id="PIRSF016516">
    <property type="entry name" value="Allantoicase"/>
    <property type="match status" value="1"/>
</dbReference>
<dbReference type="SUPFAM" id="SSF49785">
    <property type="entry name" value="Galactose-binding domain-like"/>
    <property type="match status" value="2"/>
</dbReference>
<accession>B0VP26</accession>
<comment type="catalytic activity">
    <reaction evidence="1">
        <text>allantoate + H2O = (S)-ureidoglycolate + urea</text>
        <dbReference type="Rhea" id="RHEA:11016"/>
        <dbReference type="ChEBI" id="CHEBI:15377"/>
        <dbReference type="ChEBI" id="CHEBI:16199"/>
        <dbReference type="ChEBI" id="CHEBI:17536"/>
        <dbReference type="ChEBI" id="CHEBI:57296"/>
        <dbReference type="EC" id="3.5.3.4"/>
    </reaction>
</comment>
<comment type="pathway">
    <text evidence="1">Nitrogen metabolism; (S)-allantoin degradation; (S)-ureidoglycolate from allantoate (aminidohydrolase route): step 1/1.</text>
</comment>
<comment type="similarity">
    <text evidence="1">Belongs to the allantoicase family.</text>
</comment>
<gene>
    <name evidence="1" type="primary">alc</name>
    <name type="ordered locus">ABSDF3499</name>
</gene>
<evidence type="ECO:0000255" key="1">
    <source>
        <dbReference type="HAMAP-Rule" id="MF_00813"/>
    </source>
</evidence>
<feature type="chain" id="PRO_1000134087" description="Probable allantoicase">
    <location>
        <begin position="1"/>
        <end position="336"/>
    </location>
</feature>
<sequence length="336" mass="37876">MATLHAPAFELPEILNTKTNLADARIGAQVIECSDDFFAEAKRMLQFEAPIFVEDKFDDHGKWMDGWETRRKRHAGYDWCIVKLGVSGKISALDIDTTFFTGNYPASASLEACYAPNSDLTGAKWQSILENTELGPSQHHIFMVNNDAIFTHIRLNIFPDGGVARLRVYGDVHIQVTDHEQTLDLLALENGGRVIAYSDAHFGHPRNLINPGRGVNMGDGWETKRRRAPGYDWCILALGKSGKIEKIEIDTAHFKGNFPAEVSIQAVYLENATDAQLIPQSMFWSYLLEAQPMQMDHIHEYMNEILQHEKVSHIRINMIPDGGISRVRLWGKIAKS</sequence>
<proteinExistence type="inferred from homology"/>
<organism>
    <name type="scientific">Acinetobacter baumannii (strain SDF)</name>
    <dbReference type="NCBI Taxonomy" id="509170"/>
    <lineage>
        <taxon>Bacteria</taxon>
        <taxon>Pseudomonadati</taxon>
        <taxon>Pseudomonadota</taxon>
        <taxon>Gammaproteobacteria</taxon>
        <taxon>Moraxellales</taxon>
        <taxon>Moraxellaceae</taxon>
        <taxon>Acinetobacter</taxon>
        <taxon>Acinetobacter calcoaceticus/baumannii complex</taxon>
    </lineage>
</organism>
<reference key="1">
    <citation type="journal article" date="2008" name="PLoS ONE">
        <title>Comparative analysis of Acinetobacters: three genomes for three lifestyles.</title>
        <authorList>
            <person name="Vallenet D."/>
            <person name="Nordmann P."/>
            <person name="Barbe V."/>
            <person name="Poirel L."/>
            <person name="Mangenot S."/>
            <person name="Bataille E."/>
            <person name="Dossat C."/>
            <person name="Gas S."/>
            <person name="Kreimeyer A."/>
            <person name="Lenoble P."/>
            <person name="Oztas S."/>
            <person name="Poulain J."/>
            <person name="Segurens B."/>
            <person name="Robert C."/>
            <person name="Abergel C."/>
            <person name="Claverie J.-M."/>
            <person name="Raoult D."/>
            <person name="Medigue C."/>
            <person name="Weissenbach J."/>
            <person name="Cruveiller S."/>
        </authorList>
    </citation>
    <scope>NUCLEOTIDE SEQUENCE [LARGE SCALE GENOMIC DNA]</scope>
    <source>
        <strain>SDF</strain>
    </source>
</reference>